<name>MIAB_CHLL2</name>
<protein>
    <recommendedName>
        <fullName evidence="1">tRNA-2-methylthio-N(6)-dimethylallyladenosine synthase</fullName>
        <ecNumber evidence="1">2.8.4.3</ecNumber>
    </recommendedName>
    <alternativeName>
        <fullName evidence="1">(Dimethylallyl)adenosine tRNA methylthiotransferase MiaB</fullName>
    </alternativeName>
    <alternativeName>
        <fullName evidence="1">tRNA-i(6)A37 methylthiotransferase</fullName>
    </alternativeName>
</protein>
<feature type="chain" id="PRO_0000374208" description="tRNA-2-methylthio-N(6)-dimethylallyladenosine synthase">
    <location>
        <begin position="1"/>
        <end position="442"/>
    </location>
</feature>
<feature type="domain" description="MTTase N-terminal" evidence="1">
    <location>
        <begin position="6"/>
        <end position="122"/>
    </location>
</feature>
<feature type="domain" description="Radical SAM core" evidence="2">
    <location>
        <begin position="143"/>
        <end position="373"/>
    </location>
</feature>
<feature type="domain" description="TRAM" evidence="1">
    <location>
        <begin position="376"/>
        <end position="439"/>
    </location>
</feature>
<feature type="binding site" evidence="1">
    <location>
        <position position="15"/>
    </location>
    <ligand>
        <name>[4Fe-4S] cluster</name>
        <dbReference type="ChEBI" id="CHEBI:49883"/>
        <label>1</label>
    </ligand>
</feature>
<feature type="binding site" evidence="1">
    <location>
        <position position="51"/>
    </location>
    <ligand>
        <name>[4Fe-4S] cluster</name>
        <dbReference type="ChEBI" id="CHEBI:49883"/>
        <label>1</label>
    </ligand>
</feature>
<feature type="binding site" evidence="1">
    <location>
        <position position="85"/>
    </location>
    <ligand>
        <name>[4Fe-4S] cluster</name>
        <dbReference type="ChEBI" id="CHEBI:49883"/>
        <label>1</label>
    </ligand>
</feature>
<feature type="binding site" evidence="1">
    <location>
        <position position="157"/>
    </location>
    <ligand>
        <name>[4Fe-4S] cluster</name>
        <dbReference type="ChEBI" id="CHEBI:49883"/>
        <label>2</label>
        <note>4Fe-4S-S-AdoMet</note>
    </ligand>
</feature>
<feature type="binding site" evidence="1">
    <location>
        <position position="161"/>
    </location>
    <ligand>
        <name>[4Fe-4S] cluster</name>
        <dbReference type="ChEBI" id="CHEBI:49883"/>
        <label>2</label>
        <note>4Fe-4S-S-AdoMet</note>
    </ligand>
</feature>
<feature type="binding site" evidence="1">
    <location>
        <position position="164"/>
    </location>
    <ligand>
        <name>[4Fe-4S] cluster</name>
        <dbReference type="ChEBI" id="CHEBI:49883"/>
        <label>2</label>
        <note>4Fe-4S-S-AdoMet</note>
    </ligand>
</feature>
<reference key="1">
    <citation type="submission" date="2008-05" db="EMBL/GenBank/DDBJ databases">
        <title>Complete sequence of Chlorobium limicola DSM 245.</title>
        <authorList>
            <consortium name="US DOE Joint Genome Institute"/>
            <person name="Lucas S."/>
            <person name="Copeland A."/>
            <person name="Lapidus A."/>
            <person name="Glavina del Rio T."/>
            <person name="Dalin E."/>
            <person name="Tice H."/>
            <person name="Bruce D."/>
            <person name="Goodwin L."/>
            <person name="Pitluck S."/>
            <person name="Schmutz J."/>
            <person name="Larimer F."/>
            <person name="Land M."/>
            <person name="Hauser L."/>
            <person name="Kyrpides N."/>
            <person name="Ovchinnikova G."/>
            <person name="Zhao F."/>
            <person name="Li T."/>
            <person name="Liu Z."/>
            <person name="Overmann J."/>
            <person name="Bryant D.A."/>
            <person name="Richardson P."/>
        </authorList>
    </citation>
    <scope>NUCLEOTIDE SEQUENCE [LARGE SCALE GENOMIC DNA]</scope>
    <source>
        <strain>DSM 245 / NBRC 103803 / 6330</strain>
    </source>
</reference>
<gene>
    <name evidence="1" type="primary">miaB</name>
    <name type="ordered locus">Clim_2173</name>
</gene>
<keyword id="KW-0004">4Fe-4S</keyword>
<keyword id="KW-0963">Cytoplasm</keyword>
<keyword id="KW-0408">Iron</keyword>
<keyword id="KW-0411">Iron-sulfur</keyword>
<keyword id="KW-0479">Metal-binding</keyword>
<keyword id="KW-0949">S-adenosyl-L-methionine</keyword>
<keyword id="KW-0808">Transferase</keyword>
<keyword id="KW-0819">tRNA processing</keyword>
<sequence length="442" mass="49429">MPRDRRKFYIHTFGCQMNQADSGIIAALLEQDGYQQASSEEEAGIIMLNTCAVRENAVERIAHYLQHVKGFKRKCPELLVGLTGCIPQYRREELFTVFPVIDFLAGPDTYRVLPVLIAEAGKGRAARLDFNPFETYDGVTQARTQSLTAFVPIMRGCNNMCAFCVVPFTRGRERSHPFGSVLDEVRALAESGCREITLLGQNVNSYHDSQSGADFSRLLDAVSREAPETRIRFTTSHPKDMSHSLVETMASRPNICNHLHLPVQSGSTRMLARMNRGHDIEDYRNKIELLRERIPGISLSTDLIAGFCGESDADHCQTLELMREVRFDSAFMFYYSVRPGTLAARTMPDDVPEEVKKQRLQEIIDLQNGISAELLRLAIGSVVEVLVESESRRSSDQLMGRTGGNRVVVFDRGIHQPGDMVRVMITGSTSATLIGRAAENQH</sequence>
<proteinExistence type="inferred from homology"/>
<comment type="function">
    <text evidence="1">Catalyzes the methylthiolation of N6-(dimethylallyl)adenosine (i(6)A), leading to the formation of 2-methylthio-N6-(dimethylallyl)adenosine (ms(2)i(6)A) at position 37 in tRNAs that read codons beginning with uridine.</text>
</comment>
<comment type="catalytic activity">
    <reaction evidence="1">
        <text>N(6)-dimethylallyladenosine(37) in tRNA + (sulfur carrier)-SH + AH2 + 2 S-adenosyl-L-methionine = 2-methylsulfanyl-N(6)-dimethylallyladenosine(37) in tRNA + (sulfur carrier)-H + 5'-deoxyadenosine + L-methionine + A + S-adenosyl-L-homocysteine + 2 H(+)</text>
        <dbReference type="Rhea" id="RHEA:37067"/>
        <dbReference type="Rhea" id="RHEA-COMP:10375"/>
        <dbReference type="Rhea" id="RHEA-COMP:10376"/>
        <dbReference type="Rhea" id="RHEA-COMP:14737"/>
        <dbReference type="Rhea" id="RHEA-COMP:14739"/>
        <dbReference type="ChEBI" id="CHEBI:13193"/>
        <dbReference type="ChEBI" id="CHEBI:15378"/>
        <dbReference type="ChEBI" id="CHEBI:17319"/>
        <dbReference type="ChEBI" id="CHEBI:17499"/>
        <dbReference type="ChEBI" id="CHEBI:29917"/>
        <dbReference type="ChEBI" id="CHEBI:57844"/>
        <dbReference type="ChEBI" id="CHEBI:57856"/>
        <dbReference type="ChEBI" id="CHEBI:59789"/>
        <dbReference type="ChEBI" id="CHEBI:64428"/>
        <dbReference type="ChEBI" id="CHEBI:74415"/>
        <dbReference type="ChEBI" id="CHEBI:74417"/>
        <dbReference type="EC" id="2.8.4.3"/>
    </reaction>
</comment>
<comment type="cofactor">
    <cofactor evidence="1">
        <name>[4Fe-4S] cluster</name>
        <dbReference type="ChEBI" id="CHEBI:49883"/>
    </cofactor>
    <text evidence="1">Binds 2 [4Fe-4S] clusters. One cluster is coordinated with 3 cysteines and an exchangeable S-adenosyl-L-methionine.</text>
</comment>
<comment type="subunit">
    <text evidence="1">Monomer.</text>
</comment>
<comment type="subcellular location">
    <subcellularLocation>
        <location evidence="1">Cytoplasm</location>
    </subcellularLocation>
</comment>
<comment type="similarity">
    <text evidence="1">Belongs to the methylthiotransferase family. MiaB subfamily.</text>
</comment>
<dbReference type="EC" id="2.8.4.3" evidence="1"/>
<dbReference type="EMBL" id="CP001097">
    <property type="protein sequence ID" value="ACD91197.1"/>
    <property type="molecule type" value="Genomic_DNA"/>
</dbReference>
<dbReference type="RefSeq" id="WP_012467065.1">
    <property type="nucleotide sequence ID" value="NC_010803.1"/>
</dbReference>
<dbReference type="SMR" id="B3EGT4"/>
<dbReference type="STRING" id="290315.Clim_2173"/>
<dbReference type="KEGG" id="cli:Clim_2173"/>
<dbReference type="eggNOG" id="COG0621">
    <property type="taxonomic scope" value="Bacteria"/>
</dbReference>
<dbReference type="HOGENOM" id="CLU_018697_2_0_10"/>
<dbReference type="OrthoDB" id="9805215at2"/>
<dbReference type="Proteomes" id="UP000008841">
    <property type="component" value="Chromosome"/>
</dbReference>
<dbReference type="GO" id="GO:0005829">
    <property type="term" value="C:cytosol"/>
    <property type="evidence" value="ECO:0007669"/>
    <property type="project" value="TreeGrafter"/>
</dbReference>
<dbReference type="GO" id="GO:0051539">
    <property type="term" value="F:4 iron, 4 sulfur cluster binding"/>
    <property type="evidence" value="ECO:0007669"/>
    <property type="project" value="UniProtKB-UniRule"/>
</dbReference>
<dbReference type="GO" id="GO:0046872">
    <property type="term" value="F:metal ion binding"/>
    <property type="evidence" value="ECO:0007669"/>
    <property type="project" value="UniProtKB-KW"/>
</dbReference>
<dbReference type="GO" id="GO:0035597">
    <property type="term" value="F:N6-isopentenyladenosine methylthiotransferase activity"/>
    <property type="evidence" value="ECO:0007669"/>
    <property type="project" value="TreeGrafter"/>
</dbReference>
<dbReference type="CDD" id="cd01335">
    <property type="entry name" value="Radical_SAM"/>
    <property type="match status" value="1"/>
</dbReference>
<dbReference type="FunFam" id="3.40.50.12160:FF:000003">
    <property type="entry name" value="CDK5 regulatory subunit-associated protein 1"/>
    <property type="match status" value="1"/>
</dbReference>
<dbReference type="FunFam" id="3.80.30.20:FF:000001">
    <property type="entry name" value="tRNA-2-methylthio-N(6)-dimethylallyladenosine synthase 2"/>
    <property type="match status" value="1"/>
</dbReference>
<dbReference type="Gene3D" id="3.40.50.12160">
    <property type="entry name" value="Methylthiotransferase, N-terminal domain"/>
    <property type="match status" value="1"/>
</dbReference>
<dbReference type="Gene3D" id="3.80.30.20">
    <property type="entry name" value="tm_1862 like domain"/>
    <property type="match status" value="1"/>
</dbReference>
<dbReference type="HAMAP" id="MF_01864">
    <property type="entry name" value="tRNA_metthiotr_MiaB"/>
    <property type="match status" value="1"/>
</dbReference>
<dbReference type="InterPro" id="IPR006638">
    <property type="entry name" value="Elp3/MiaA/NifB-like_rSAM"/>
</dbReference>
<dbReference type="InterPro" id="IPR005839">
    <property type="entry name" value="Methylthiotransferase"/>
</dbReference>
<dbReference type="InterPro" id="IPR020612">
    <property type="entry name" value="Methylthiotransferase_CS"/>
</dbReference>
<dbReference type="InterPro" id="IPR013848">
    <property type="entry name" value="Methylthiotransferase_N"/>
</dbReference>
<dbReference type="InterPro" id="IPR038135">
    <property type="entry name" value="Methylthiotransferase_N_sf"/>
</dbReference>
<dbReference type="InterPro" id="IPR006463">
    <property type="entry name" value="MiaB_methiolase"/>
</dbReference>
<dbReference type="InterPro" id="IPR007197">
    <property type="entry name" value="rSAM"/>
</dbReference>
<dbReference type="InterPro" id="IPR023404">
    <property type="entry name" value="rSAM_horseshoe"/>
</dbReference>
<dbReference type="InterPro" id="IPR002792">
    <property type="entry name" value="TRAM_dom"/>
</dbReference>
<dbReference type="NCBIfam" id="TIGR01574">
    <property type="entry name" value="miaB-methiolase"/>
    <property type="match status" value="1"/>
</dbReference>
<dbReference type="NCBIfam" id="TIGR00089">
    <property type="entry name" value="MiaB/RimO family radical SAM methylthiotransferase"/>
    <property type="match status" value="1"/>
</dbReference>
<dbReference type="PANTHER" id="PTHR43020">
    <property type="entry name" value="CDK5 REGULATORY SUBUNIT-ASSOCIATED PROTEIN 1"/>
    <property type="match status" value="1"/>
</dbReference>
<dbReference type="PANTHER" id="PTHR43020:SF2">
    <property type="entry name" value="MITOCHONDRIAL TRNA METHYLTHIOTRANSFERASE CDK5RAP1"/>
    <property type="match status" value="1"/>
</dbReference>
<dbReference type="Pfam" id="PF04055">
    <property type="entry name" value="Radical_SAM"/>
    <property type="match status" value="1"/>
</dbReference>
<dbReference type="Pfam" id="PF01938">
    <property type="entry name" value="TRAM"/>
    <property type="match status" value="1"/>
</dbReference>
<dbReference type="Pfam" id="PF00919">
    <property type="entry name" value="UPF0004"/>
    <property type="match status" value="1"/>
</dbReference>
<dbReference type="SFLD" id="SFLDF00273">
    <property type="entry name" value="(dimethylallyl)adenosine_tRNA"/>
    <property type="match status" value="1"/>
</dbReference>
<dbReference type="SFLD" id="SFLDG01082">
    <property type="entry name" value="B12-binding_domain_containing"/>
    <property type="match status" value="1"/>
</dbReference>
<dbReference type="SFLD" id="SFLDF00413">
    <property type="entry name" value="CDK5RAP1"/>
    <property type="match status" value="1"/>
</dbReference>
<dbReference type="SFLD" id="SFLDG01061">
    <property type="entry name" value="methylthiotransferase"/>
    <property type="match status" value="1"/>
</dbReference>
<dbReference type="SMART" id="SM00729">
    <property type="entry name" value="Elp3"/>
    <property type="match status" value="1"/>
</dbReference>
<dbReference type="SUPFAM" id="SSF102114">
    <property type="entry name" value="Radical SAM enzymes"/>
    <property type="match status" value="1"/>
</dbReference>
<dbReference type="PROSITE" id="PS51449">
    <property type="entry name" value="MTTASE_N"/>
    <property type="match status" value="1"/>
</dbReference>
<dbReference type="PROSITE" id="PS01278">
    <property type="entry name" value="MTTASE_RADICAL"/>
    <property type="match status" value="1"/>
</dbReference>
<dbReference type="PROSITE" id="PS51918">
    <property type="entry name" value="RADICAL_SAM"/>
    <property type="match status" value="1"/>
</dbReference>
<dbReference type="PROSITE" id="PS50926">
    <property type="entry name" value="TRAM"/>
    <property type="match status" value="1"/>
</dbReference>
<organism>
    <name type="scientific">Chlorobium limicola (strain DSM 245 / NBRC 103803 / 6330)</name>
    <dbReference type="NCBI Taxonomy" id="290315"/>
    <lineage>
        <taxon>Bacteria</taxon>
        <taxon>Pseudomonadati</taxon>
        <taxon>Chlorobiota</taxon>
        <taxon>Chlorobiia</taxon>
        <taxon>Chlorobiales</taxon>
        <taxon>Chlorobiaceae</taxon>
        <taxon>Chlorobium/Pelodictyon group</taxon>
        <taxon>Chlorobium</taxon>
    </lineage>
</organism>
<evidence type="ECO:0000255" key="1">
    <source>
        <dbReference type="HAMAP-Rule" id="MF_01864"/>
    </source>
</evidence>
<evidence type="ECO:0000255" key="2">
    <source>
        <dbReference type="PROSITE-ProRule" id="PRU01266"/>
    </source>
</evidence>
<accession>B3EGT4</accession>